<keyword id="KW-0150">Chloroplast</keyword>
<keyword id="KW-0240">DNA-directed RNA polymerase</keyword>
<keyword id="KW-0460">Magnesium</keyword>
<keyword id="KW-0479">Metal-binding</keyword>
<keyword id="KW-0548">Nucleotidyltransferase</keyword>
<keyword id="KW-0934">Plastid</keyword>
<keyword id="KW-0804">Transcription</keyword>
<keyword id="KW-0808">Transferase</keyword>
<keyword id="KW-0862">Zinc</keyword>
<dbReference type="EC" id="2.7.7.6"/>
<dbReference type="EMBL" id="AB001684">
    <property type="protein sequence ID" value="BAA57970.1"/>
    <property type="molecule type" value="Genomic_DNA"/>
</dbReference>
<dbReference type="PIR" id="T07322">
    <property type="entry name" value="T07322"/>
</dbReference>
<dbReference type="RefSeq" id="NP_045894.1">
    <property type="nucleotide sequence ID" value="NC_001865.1"/>
</dbReference>
<dbReference type="GeneID" id="809115"/>
<dbReference type="GO" id="GO:0009507">
    <property type="term" value="C:chloroplast"/>
    <property type="evidence" value="ECO:0007669"/>
    <property type="project" value="UniProtKB-SubCell"/>
</dbReference>
<dbReference type="GO" id="GO:0000428">
    <property type="term" value="C:DNA-directed RNA polymerase complex"/>
    <property type="evidence" value="ECO:0007669"/>
    <property type="project" value="UniProtKB-KW"/>
</dbReference>
<dbReference type="GO" id="GO:0005739">
    <property type="term" value="C:mitochondrion"/>
    <property type="evidence" value="ECO:0007669"/>
    <property type="project" value="GOC"/>
</dbReference>
<dbReference type="GO" id="GO:0003677">
    <property type="term" value="F:DNA binding"/>
    <property type="evidence" value="ECO:0007669"/>
    <property type="project" value="InterPro"/>
</dbReference>
<dbReference type="GO" id="GO:0003899">
    <property type="term" value="F:DNA-directed RNA polymerase activity"/>
    <property type="evidence" value="ECO:0007669"/>
    <property type="project" value="UniProtKB-EC"/>
</dbReference>
<dbReference type="GO" id="GO:0046872">
    <property type="term" value="F:metal ion binding"/>
    <property type="evidence" value="ECO:0007669"/>
    <property type="project" value="UniProtKB-KW"/>
</dbReference>
<dbReference type="GO" id="GO:0006351">
    <property type="term" value="P:DNA-templated transcription"/>
    <property type="evidence" value="ECO:0007669"/>
    <property type="project" value="InterPro"/>
</dbReference>
<dbReference type="Gene3D" id="1.10.40.90">
    <property type="match status" value="1"/>
</dbReference>
<dbReference type="Gene3D" id="2.40.40.20">
    <property type="match status" value="1"/>
</dbReference>
<dbReference type="Gene3D" id="4.10.860.120">
    <property type="entry name" value="RNA polymerase II, clamp domain"/>
    <property type="match status" value="1"/>
</dbReference>
<dbReference type="Gene3D" id="1.10.274.100">
    <property type="entry name" value="RNA polymerase Rpb1, domain 3"/>
    <property type="match status" value="1"/>
</dbReference>
<dbReference type="InterPro" id="IPR045867">
    <property type="entry name" value="DNA-dir_RpoC_beta_prime"/>
</dbReference>
<dbReference type="InterPro" id="IPR000722">
    <property type="entry name" value="RNA_pol_asu"/>
</dbReference>
<dbReference type="InterPro" id="IPR006592">
    <property type="entry name" value="RNA_pol_N"/>
</dbReference>
<dbReference type="InterPro" id="IPR007080">
    <property type="entry name" value="RNA_pol_Rpb1_1"/>
</dbReference>
<dbReference type="InterPro" id="IPR042102">
    <property type="entry name" value="RNA_pol_Rpb1_3_sf"/>
</dbReference>
<dbReference type="InterPro" id="IPR044893">
    <property type="entry name" value="RNA_pol_Rpb1_clamp_domain"/>
</dbReference>
<dbReference type="PANTHER" id="PTHR19376">
    <property type="entry name" value="DNA-DIRECTED RNA POLYMERASE"/>
    <property type="match status" value="1"/>
</dbReference>
<dbReference type="PANTHER" id="PTHR19376:SF54">
    <property type="entry name" value="DNA-DIRECTED RNA POLYMERASE SUBUNIT BETA"/>
    <property type="match status" value="1"/>
</dbReference>
<dbReference type="Pfam" id="PF04997">
    <property type="entry name" value="RNA_pol_Rpb1_1"/>
    <property type="match status" value="1"/>
</dbReference>
<dbReference type="Pfam" id="PF00623">
    <property type="entry name" value="RNA_pol_Rpb1_2"/>
    <property type="match status" value="2"/>
</dbReference>
<dbReference type="SMART" id="SM00663">
    <property type="entry name" value="RPOLA_N"/>
    <property type="match status" value="1"/>
</dbReference>
<dbReference type="SUPFAM" id="SSF64484">
    <property type="entry name" value="beta and beta-prime subunits of DNA dependent RNA-polymerase"/>
    <property type="match status" value="1"/>
</dbReference>
<reference key="1">
    <citation type="journal article" date="1997" name="Proc. Natl. Acad. Sci. U.S.A.">
        <title>Complete nucleotide sequence of the chloroplast genome from the green alga Chlorella vulgaris: the existence of genes possibly involved in chloroplast division.</title>
        <authorList>
            <person name="Wakasugi T."/>
            <person name="Nagai T."/>
            <person name="Kapoor M."/>
            <person name="Sugita M."/>
            <person name="Ito M."/>
            <person name="Ito S."/>
            <person name="Tsudzuki J."/>
            <person name="Nakashima K."/>
            <person name="Tsudzuki T."/>
            <person name="Suzuki Y."/>
            <person name="Hamada A."/>
            <person name="Ohta T."/>
            <person name="Inamura A."/>
            <person name="Yoshinaga K."/>
            <person name="Sugiura M."/>
        </authorList>
    </citation>
    <scope>NUCLEOTIDE SEQUENCE [LARGE SCALE GENOMIC DNA]</scope>
    <source>
        <strain>IAM C-27 / Tamiya</strain>
    </source>
</reference>
<proteinExistence type="inferred from homology"/>
<feature type="chain" id="PRO_0000067868" description="DNA-directed RNA polymerase subunit beta'">
    <location>
        <begin position="1"/>
        <end position="836"/>
    </location>
</feature>
<feature type="binding site" evidence="2">
    <location>
        <position position="71"/>
    </location>
    <ligand>
        <name>Zn(2+)</name>
        <dbReference type="ChEBI" id="CHEBI:29105"/>
    </ligand>
</feature>
<feature type="binding site" evidence="2">
    <location>
        <position position="73"/>
    </location>
    <ligand>
        <name>Zn(2+)</name>
        <dbReference type="ChEBI" id="CHEBI:29105"/>
    </ligand>
</feature>
<feature type="binding site" evidence="2">
    <location>
        <position position="90"/>
    </location>
    <ligand>
        <name>Zn(2+)</name>
        <dbReference type="ChEBI" id="CHEBI:29105"/>
    </ligand>
</feature>
<feature type="binding site" evidence="2">
    <location>
        <position position="93"/>
    </location>
    <ligand>
        <name>Zn(2+)</name>
        <dbReference type="ChEBI" id="CHEBI:29105"/>
    </ligand>
</feature>
<feature type="binding site" evidence="2">
    <location>
        <position position="623"/>
    </location>
    <ligand>
        <name>Mg(2+)</name>
        <dbReference type="ChEBI" id="CHEBI:18420"/>
    </ligand>
</feature>
<feature type="binding site" evidence="2">
    <location>
        <position position="625"/>
    </location>
    <ligand>
        <name>Mg(2+)</name>
        <dbReference type="ChEBI" id="CHEBI:18420"/>
    </ligand>
</feature>
<feature type="binding site" evidence="2">
    <location>
        <position position="627"/>
    </location>
    <ligand>
        <name>Mg(2+)</name>
        <dbReference type="ChEBI" id="CHEBI:18420"/>
    </ligand>
</feature>
<organism>
    <name type="scientific">Chlorella vulgaris</name>
    <name type="common">Green alga</name>
    <dbReference type="NCBI Taxonomy" id="3077"/>
    <lineage>
        <taxon>Eukaryota</taxon>
        <taxon>Viridiplantae</taxon>
        <taxon>Chlorophyta</taxon>
        <taxon>core chlorophytes</taxon>
        <taxon>Trebouxiophyceae</taxon>
        <taxon>Chlorellales</taxon>
        <taxon>Chlorellaceae</taxon>
        <taxon>Chlorella clade</taxon>
        <taxon>Chlorella</taxon>
    </lineage>
</organism>
<comment type="function">
    <text evidence="2">DNA-dependent RNA polymerase catalyzes the transcription of DNA into RNA using the four ribonucleoside triphosphates as substrates.</text>
</comment>
<comment type="catalytic activity">
    <reaction evidence="2">
        <text>RNA(n) + a ribonucleoside 5'-triphosphate = RNA(n+1) + diphosphate</text>
        <dbReference type="Rhea" id="RHEA:21248"/>
        <dbReference type="Rhea" id="RHEA-COMP:14527"/>
        <dbReference type="Rhea" id="RHEA-COMP:17342"/>
        <dbReference type="ChEBI" id="CHEBI:33019"/>
        <dbReference type="ChEBI" id="CHEBI:61557"/>
        <dbReference type="ChEBI" id="CHEBI:140395"/>
        <dbReference type="EC" id="2.7.7.6"/>
    </reaction>
</comment>
<comment type="cofactor">
    <cofactor evidence="2">
        <name>Mg(2+)</name>
        <dbReference type="ChEBI" id="CHEBI:18420"/>
    </cofactor>
    <text evidence="2">Binds 1 Mg(2+) ion per subunit.</text>
</comment>
<comment type="cofactor">
    <cofactor evidence="2">
        <name>Zn(2+)</name>
        <dbReference type="ChEBI" id="CHEBI:29105"/>
    </cofactor>
    <text evidence="2">Binds 1 Zn(2+) ion per subunit.</text>
</comment>
<comment type="subunit">
    <text evidence="1">In plastids the minimal PEP RNA polymerase catalytic core is composed of four subunits: alpha, beta, beta', and beta''. When a (nuclear-encoded) sigma factor is associated with the core the holoenzyme is formed, which can initiate transcription (By similarity).</text>
</comment>
<comment type="subcellular location">
    <subcellularLocation>
        <location>Plastid</location>
        <location>Chloroplast</location>
    </subcellularLocation>
</comment>
<comment type="similarity">
    <text evidence="3">Belongs to the RNA polymerase beta' chain family. RpoC1 subfamily.</text>
</comment>
<protein>
    <recommendedName>
        <fullName>DNA-directed RNA polymerase subunit beta'</fullName>
        <ecNumber>2.7.7.6</ecNumber>
    </recommendedName>
    <alternativeName>
        <fullName>PEP</fullName>
    </alternativeName>
    <alternativeName>
        <fullName>Plastid-encoded RNA polymerase subunit beta'</fullName>
        <shortName>RNA polymerase subunit beta'</shortName>
    </alternativeName>
</protein>
<gene>
    <name type="primary">rpoC1</name>
</gene>
<name>RPOC1_CHLVU</name>
<sequence length="836" mass="96562">MSTRKSPFFKKAEISLASPKAIEIWTERYFPNGQPINEVTSSETVNYKTLKPEPHGLFCQTIFGPVVDFTCACGKKATKLVKNKKFRGYCPKCGVERTSSRVRRYRLGLIKLKQPVAHSLYVSHRPSPLRLCLGWSTKRLQAVLKAVEFCYLPLIFTTFQSERECFSFFPKSFLLLRSQLTQKNEVFLEPRSSGFNENLSSSFFFKEKKRSKRKTGKVFPLRTSPRLFHKKHQKNRPRLVFNHGVIEARLYGIAYDATWPKVEEFQEFLFYLWEQSFFYESSIPYYAFAKGVKSYKEEIPKREQSYALQTGGLALQQILSHHDSSRFEYDLIYLSKKVSMILEILKENMASLNLDYEDDQKEYKKLLSKVKKLDLLLLKWKRQRELYRDFEVGKTQPAWMILNNLPVLPPGLRPITSIGGLVVASDINSFYRKIIIRNKRMSPRNNLGIFDTTLGGSWLSWCYNLRQVQEAVDELLRTGSVDAGRPLKSLLDGLKGKKGRFRQHLLGKRVDYSGRSVIVVGPKLKLHQCGLPKEMAVELFQPFIIQQLRLQGIVFTVTAAKVLIADRKPIVWSVLGEILKRHPVLLNRAPTLHRLGIQAFLPRLVEGKAILLHPLVCPAFNADFDGDQMAVHVPLSAKTRAEALSLLWSRNQLLAPSSGQPQHLPTQDMVLGFYYLTCSLEKTLKRVDSLVSSRKLFFQSSFFLKKKNEETLKNSIPQNLYFSEFSQVKTAYDIGNLTLHTPIWVKWTSCVQTFVPERHSRLKETLLETRLTFSGQRQTLFIDTCQFFSPSFFFGKKVRFIRTTPGRIFMHWCFFEANAEMSSTPTSKEKKSLEKK</sequence>
<evidence type="ECO:0000250" key="1"/>
<evidence type="ECO:0000250" key="2">
    <source>
        <dbReference type="UniProtKB" id="P0A8T7"/>
    </source>
</evidence>
<evidence type="ECO:0000305" key="3"/>
<accession>P56300</accession>
<geneLocation type="chloroplast"/>